<accession>P06719</accession>
<feature type="signal peptide" evidence="1">
    <location>
        <begin position="1"/>
        <end position="34"/>
    </location>
</feature>
<feature type="chain" id="PRO_0000024546" description="Knob-associated histidine-rich protein">
    <location>
        <begin position="35"/>
        <end position="657"/>
    </location>
</feature>
<feature type="region of interest" description="Disordered" evidence="2">
    <location>
        <begin position="57"/>
        <end position="138"/>
    </location>
</feature>
<feature type="region of interest" description="Disordered" evidence="2">
    <location>
        <begin position="282"/>
        <end position="301"/>
    </location>
</feature>
<feature type="region of interest" description="Disordered" evidence="2">
    <location>
        <begin position="352"/>
        <end position="657"/>
    </location>
</feature>
<feature type="compositionally biased region" description="Basic residues" evidence="2">
    <location>
        <begin position="57"/>
        <end position="76"/>
    </location>
</feature>
<feature type="compositionally biased region" description="Low complexity" evidence="2">
    <location>
        <begin position="99"/>
        <end position="108"/>
    </location>
</feature>
<feature type="compositionally biased region" description="Basic residues" evidence="2">
    <location>
        <begin position="112"/>
        <end position="123"/>
    </location>
</feature>
<feature type="compositionally biased region" description="Basic and acidic residues" evidence="2">
    <location>
        <begin position="357"/>
        <end position="378"/>
    </location>
</feature>
<feature type="compositionally biased region" description="Basic and acidic residues" evidence="2">
    <location>
        <begin position="399"/>
        <end position="408"/>
    </location>
</feature>
<feature type="compositionally biased region" description="Basic residues" evidence="2">
    <location>
        <begin position="409"/>
        <end position="425"/>
    </location>
</feature>
<feature type="compositionally biased region" description="Basic and acidic residues" evidence="2">
    <location>
        <begin position="426"/>
        <end position="435"/>
    </location>
</feature>
<feature type="compositionally biased region" description="Basic residues" evidence="2">
    <location>
        <begin position="453"/>
        <end position="468"/>
    </location>
</feature>
<feature type="compositionally biased region" description="Basic and acidic residues" evidence="2">
    <location>
        <begin position="473"/>
        <end position="496"/>
    </location>
</feature>
<feature type="compositionally biased region" description="Polar residues" evidence="2">
    <location>
        <begin position="497"/>
        <end position="508"/>
    </location>
</feature>
<feature type="compositionally biased region" description="Basic and acidic residues" evidence="2">
    <location>
        <begin position="512"/>
        <end position="523"/>
    </location>
</feature>
<feature type="compositionally biased region" description="Basic and acidic residues" evidence="2">
    <location>
        <begin position="551"/>
        <end position="578"/>
    </location>
</feature>
<feature type="compositionally biased region" description="Low complexity" evidence="2">
    <location>
        <begin position="590"/>
        <end position="614"/>
    </location>
</feature>
<feature type="compositionally biased region" description="Polar residues" evidence="2">
    <location>
        <begin position="628"/>
        <end position="643"/>
    </location>
</feature>
<feature type="compositionally biased region" description="Basic residues" evidence="2">
    <location>
        <begin position="648"/>
        <end position="657"/>
    </location>
</feature>
<feature type="glycosylation site" description="N-linked (GlcNAc...) asparagine" evidence="1">
    <location>
        <position position="42"/>
    </location>
</feature>
<comment type="function">
    <text>KAHRP might mimick human histidine-rich glycoproteins to anchor host thrombospondin or a parasite analog in a binding complex with the endothelial cell receptor.</text>
</comment>
<comment type="subcellular location">
    <subcellularLocation>
        <location>Secreted</location>
    </subcellularLocation>
    <text>Cytoplasmic side of the membrane of infected erythrocytes.</text>
</comment>
<gene>
    <name type="primary">SD17</name>
</gene>
<proteinExistence type="inferred from homology"/>
<dbReference type="EMBL" id="Y00060">
    <property type="protein sequence ID" value="CAA68268.1"/>
    <property type="molecule type" value="Genomic_DNA"/>
</dbReference>
<dbReference type="PIR" id="A29454">
    <property type="entry name" value="A29454"/>
</dbReference>
<dbReference type="BMRB" id="P06719"/>
<dbReference type="GlyCosmos" id="P06719">
    <property type="glycosylation" value="1 site, No reported glycans"/>
</dbReference>
<dbReference type="GO" id="GO:0005576">
    <property type="term" value="C:extracellular region"/>
    <property type="evidence" value="ECO:0007669"/>
    <property type="project" value="UniProtKB-SubCell"/>
</dbReference>
<dbReference type="InterPro" id="IPR040805">
    <property type="entry name" value="EMP3/KAHRP_N"/>
</dbReference>
<dbReference type="PANTHER" id="PTHR35991">
    <property type="entry name" value="CA-RESPONSIVE PROTEIN"/>
    <property type="match status" value="1"/>
</dbReference>
<dbReference type="PANTHER" id="PTHR35991:SF1">
    <property type="entry name" value="CA-RESPONSIVE PROTEIN"/>
    <property type="match status" value="1"/>
</dbReference>
<dbReference type="Pfam" id="PF17986">
    <property type="entry name" value="EKAL"/>
    <property type="match status" value="1"/>
</dbReference>
<evidence type="ECO:0000255" key="1"/>
<evidence type="ECO:0000256" key="2">
    <source>
        <dbReference type="SAM" id="MobiDB-lite"/>
    </source>
</evidence>
<name>KNOB_PLAFN</name>
<sequence>MKSFKNKNTLRRKKAFPVFTKILLVSFLVWVLKCSNNCNNGNGSGDSFDFRNKRTLAQKQHEHHHHHHHHHHHQHQAPHQAPHQAHHHHHHGEVNHQAPQVHQQVHGQDQAHHHHHHHHHHLHPQQPQGTVANPPSNEPVVKTQVFREARPGGGFKAYEEKYESKHYKLKENVVDGKKDCDEKYEAANYAFSEECPYTVNDYSQENGPNIFALRKRFPLGMNDEDEEGKEALAIKDKLPGGLDEYQNQLYGICNETCTTCGPAAIDYVPADAPNGYAYGGSAHDGSHGNLRGHDNKGSEGYGYEAPYNPGFNGAPGSNGMQNYVHPWSGYSAPYGVPHGAAHGSRYSSFSSVNKYGKHGDEKHHSSKKHEGNDGEGEKKKKSKKHKDHDGEKKKSKKHKDNEDAESVKSKKHKSHDCEKKKSKKHKDNEDAESVKSKKVLKKREKSIMEKNHAAKKLTKKIKIKKKTNNSKSDGSKAHEKKENETKNTAGENKKVDSTSADNKSTNAATPGAKDKTQGGKTDKTGASTNAATNKGQCAAEGATKGATKEASTSKEATKEASTSKEATKEASTSKEATKEASTSKGATKEASTTEGATKGASTTAGSTTGATTGANAVQSKDETADKNAANNGEQVMSRGQAQLQEAGKKKKKRGCCG</sequence>
<reference key="1">
    <citation type="journal article" date="1987" name="EMBO J.">
        <title>The complete sequence of the gene for the knob-associated histidine-rich protein from Plasmodium falciparum.</title>
        <authorList>
            <person name="Triglia T."/>
            <person name="Stahl H.-D."/>
            <person name="Crewther P.E."/>
            <person name="Scanlon D.B."/>
            <person name="Brown G.V."/>
            <person name="Anders R.F."/>
            <person name="Kemp D.J."/>
        </authorList>
    </citation>
    <scope>NUCLEOTIDE SEQUENCE [GENOMIC DNA]</scope>
</reference>
<keyword id="KW-0325">Glycoprotein</keyword>
<keyword id="KW-0461">Malaria</keyword>
<keyword id="KW-0677">Repeat</keyword>
<keyword id="KW-0964">Secreted</keyword>
<keyword id="KW-0732">Signal</keyword>
<organism>
    <name type="scientific">Plasmodium falciparum (isolate NF7 / Ghana)</name>
    <dbReference type="NCBI Taxonomy" id="5842"/>
    <lineage>
        <taxon>Eukaryota</taxon>
        <taxon>Sar</taxon>
        <taxon>Alveolata</taxon>
        <taxon>Apicomplexa</taxon>
        <taxon>Aconoidasida</taxon>
        <taxon>Haemosporida</taxon>
        <taxon>Plasmodiidae</taxon>
        <taxon>Plasmodium</taxon>
        <taxon>Plasmodium (Laverania)</taxon>
    </lineage>
</organism>
<protein>
    <recommendedName>
        <fullName>Knob-associated histidine-rich protein</fullName>
        <shortName>KAHRP</shortName>
    </recommendedName>
</protein>